<evidence type="ECO:0000250" key="1">
    <source>
        <dbReference type="UniProtKB" id="P26321"/>
    </source>
</evidence>
<evidence type="ECO:0000256" key="2">
    <source>
        <dbReference type="SAM" id="MobiDB-lite"/>
    </source>
</evidence>
<evidence type="ECO:0000305" key="3"/>
<proteinExistence type="evidence at protein level"/>
<protein>
    <recommendedName>
        <fullName evidence="3">Large ribosomal subunit protein uL18</fullName>
    </recommendedName>
    <alternativeName>
        <fullName>60S ribosomal protein L5</fullName>
    </alternativeName>
</protein>
<comment type="function">
    <text evidence="1">Component of the ribosome, a large ribonucleoprotein complex responsible for the synthesis of proteins in the cell. The small ribosomal subunit (SSU) binds messenger RNAs (mRNAs) and translates the encoded message by selecting cognate aminoacyl-transfer RNA (tRNA) molecules. The large subunit (LSU) contains the ribosomal catalytic site termed the peptidyl transferase center (PTC), which catalyzes the formation of peptide bonds, thereby polymerizing the amino acids delivered by tRNAs into a polypeptide chain. The nascent polypeptides leave the ribosome through a tunnel in the LSU and interact with protein factors that function in enzymatic processing, targeting, and the membrane insertion of nascent chains at the exit of the ribosomal tunnel.</text>
</comment>
<comment type="subunit">
    <text evidence="1">Component of the large ribosomal subunit (LSU).</text>
</comment>
<comment type="subcellular location">
    <subcellularLocation>
        <location evidence="1">Cytoplasm</location>
    </subcellularLocation>
    <subcellularLocation>
        <location evidence="1">Nucleus</location>
    </subcellularLocation>
</comment>
<comment type="similarity">
    <text evidence="3">Belongs to the universal ribosomal protein uL18 family.</text>
</comment>
<dbReference type="EMBL" id="Z49967">
    <property type="protein sequence ID" value="CAA90251.1"/>
    <property type="molecule type" value="Genomic_DNA"/>
</dbReference>
<dbReference type="PIR" id="T22631">
    <property type="entry name" value="T22631"/>
</dbReference>
<dbReference type="RefSeq" id="NP_495811.1">
    <property type="nucleotide sequence ID" value="NM_063410.7"/>
</dbReference>
<dbReference type="PDB" id="9BH5">
    <property type="method" value="EM"/>
    <property type="resolution" value="2.63 A"/>
    <property type="chains" value="CD=1-293"/>
</dbReference>
<dbReference type="PDB" id="9CAI">
    <property type="method" value="EM"/>
    <property type="resolution" value="2.59 A"/>
    <property type="chains" value="CD=1-293"/>
</dbReference>
<dbReference type="PDBsum" id="9BH5"/>
<dbReference type="PDBsum" id="9CAI"/>
<dbReference type="EMDB" id="EMD-44533"/>
<dbReference type="EMDB" id="EMD-45392"/>
<dbReference type="SMR" id="P49405"/>
<dbReference type="BioGRID" id="39699">
    <property type="interactions" value="101"/>
</dbReference>
<dbReference type="DIP" id="DIP-24622N"/>
<dbReference type="FunCoup" id="P49405">
    <property type="interactions" value="2224"/>
</dbReference>
<dbReference type="IntAct" id="P49405">
    <property type="interactions" value="1"/>
</dbReference>
<dbReference type="STRING" id="6239.F54C9.5.1"/>
<dbReference type="iPTMnet" id="P49405"/>
<dbReference type="PaxDb" id="6239-F54C9.5"/>
<dbReference type="PeptideAtlas" id="P49405"/>
<dbReference type="EnsemblMetazoa" id="F54C9.5.1">
    <property type="protein sequence ID" value="F54C9.5.1"/>
    <property type="gene ID" value="WBGene00004416"/>
</dbReference>
<dbReference type="GeneID" id="174371"/>
<dbReference type="KEGG" id="cel:CELE_F54C9.5"/>
<dbReference type="UCSC" id="F54C9.5.1">
    <property type="organism name" value="c. elegans"/>
</dbReference>
<dbReference type="AGR" id="WB:WBGene00004416"/>
<dbReference type="CTD" id="174371"/>
<dbReference type="WormBase" id="F54C9.5">
    <property type="protein sequence ID" value="CE02255"/>
    <property type="gene ID" value="WBGene00004416"/>
    <property type="gene designation" value="rpl-5"/>
</dbReference>
<dbReference type="eggNOG" id="KOG0875">
    <property type="taxonomic scope" value="Eukaryota"/>
</dbReference>
<dbReference type="GeneTree" id="ENSGT00950000183210"/>
<dbReference type="HOGENOM" id="CLU_056222_1_0_1"/>
<dbReference type="InParanoid" id="P49405"/>
<dbReference type="OMA" id="CQIASAH"/>
<dbReference type="OrthoDB" id="1618453at2759"/>
<dbReference type="PhylomeDB" id="P49405"/>
<dbReference type="Reactome" id="R-CEL-156827">
    <property type="pathway name" value="L13a-mediated translational silencing of Ceruloplasmin expression"/>
</dbReference>
<dbReference type="Reactome" id="R-CEL-1799339">
    <property type="pathway name" value="SRP-dependent cotranslational protein targeting to membrane"/>
</dbReference>
<dbReference type="Reactome" id="R-CEL-72689">
    <property type="pathway name" value="Formation of a pool of free 40S subunits"/>
</dbReference>
<dbReference type="Reactome" id="R-CEL-72706">
    <property type="pathway name" value="GTP hydrolysis and joining of the 60S ribosomal subunit"/>
</dbReference>
<dbReference type="Reactome" id="R-CEL-975956">
    <property type="pathway name" value="Nonsense Mediated Decay (NMD) independent of the Exon Junction Complex (EJC)"/>
</dbReference>
<dbReference type="Reactome" id="R-CEL-975957">
    <property type="pathway name" value="Nonsense Mediated Decay (NMD) enhanced by the Exon Junction Complex (EJC)"/>
</dbReference>
<dbReference type="PRO" id="PR:P49405"/>
<dbReference type="Proteomes" id="UP000001940">
    <property type="component" value="Chromosome II"/>
</dbReference>
<dbReference type="Bgee" id="WBGene00004416">
    <property type="expression patterns" value="Expressed in larva and 4 other cell types or tissues"/>
</dbReference>
<dbReference type="GO" id="GO:0022625">
    <property type="term" value="C:cytosolic large ribosomal subunit"/>
    <property type="evidence" value="ECO:0000318"/>
    <property type="project" value="GO_Central"/>
</dbReference>
<dbReference type="GO" id="GO:0005634">
    <property type="term" value="C:nucleus"/>
    <property type="evidence" value="ECO:0007669"/>
    <property type="project" value="UniProtKB-SubCell"/>
</dbReference>
<dbReference type="GO" id="GO:0008097">
    <property type="term" value="F:5S rRNA binding"/>
    <property type="evidence" value="ECO:0000318"/>
    <property type="project" value="GO_Central"/>
</dbReference>
<dbReference type="GO" id="GO:0003735">
    <property type="term" value="F:structural constituent of ribosome"/>
    <property type="evidence" value="ECO:0000318"/>
    <property type="project" value="GO_Central"/>
</dbReference>
<dbReference type="GO" id="GO:0000027">
    <property type="term" value="P:ribosomal large subunit assembly"/>
    <property type="evidence" value="ECO:0000318"/>
    <property type="project" value="GO_Central"/>
</dbReference>
<dbReference type="GO" id="GO:0006412">
    <property type="term" value="P:translation"/>
    <property type="evidence" value="ECO:0007669"/>
    <property type="project" value="InterPro"/>
</dbReference>
<dbReference type="CDD" id="cd00432">
    <property type="entry name" value="Ribosomal_L18_L5e"/>
    <property type="match status" value="1"/>
</dbReference>
<dbReference type="FunFam" id="3.30.420.100:FF:000002">
    <property type="entry name" value="60S ribosomal protein L5"/>
    <property type="match status" value="1"/>
</dbReference>
<dbReference type="Gene3D" id="3.30.420.100">
    <property type="match status" value="1"/>
</dbReference>
<dbReference type="HAMAP" id="MF_01337_A">
    <property type="entry name" value="Ribosomal_uL18_A"/>
    <property type="match status" value="1"/>
</dbReference>
<dbReference type="InterPro" id="IPR005485">
    <property type="entry name" value="Rbsml_uL18_euk"/>
</dbReference>
<dbReference type="InterPro" id="IPR025607">
    <property type="entry name" value="Ribosomal_uL18_C_euk"/>
</dbReference>
<dbReference type="PANTHER" id="PTHR23410:SF12">
    <property type="entry name" value="LARGE RIBOSOMAL SUBUNIT PROTEIN UL18"/>
    <property type="match status" value="1"/>
</dbReference>
<dbReference type="PANTHER" id="PTHR23410">
    <property type="entry name" value="RIBOSOMAL PROTEIN L5-RELATED"/>
    <property type="match status" value="1"/>
</dbReference>
<dbReference type="Pfam" id="PF14204">
    <property type="entry name" value="Ribosomal_L18_c"/>
    <property type="match status" value="1"/>
</dbReference>
<dbReference type="Pfam" id="PF17144">
    <property type="entry name" value="Ribosomal_L5e"/>
    <property type="match status" value="1"/>
</dbReference>
<dbReference type="PRINTS" id="PR00058">
    <property type="entry name" value="RIBOSOMALL5"/>
</dbReference>
<dbReference type="SUPFAM" id="SSF53137">
    <property type="entry name" value="Translational machinery components"/>
    <property type="match status" value="1"/>
</dbReference>
<organism>
    <name type="scientific">Caenorhabditis elegans</name>
    <dbReference type="NCBI Taxonomy" id="6239"/>
    <lineage>
        <taxon>Eukaryota</taxon>
        <taxon>Metazoa</taxon>
        <taxon>Ecdysozoa</taxon>
        <taxon>Nematoda</taxon>
        <taxon>Chromadorea</taxon>
        <taxon>Rhabditida</taxon>
        <taxon>Rhabditina</taxon>
        <taxon>Rhabditomorpha</taxon>
        <taxon>Rhabditoidea</taxon>
        <taxon>Rhabditidae</taxon>
        <taxon>Peloderinae</taxon>
        <taxon>Caenorhabditis</taxon>
    </lineage>
</organism>
<feature type="chain" id="PRO_0000131443" description="Large ribosomal subunit protein uL18">
    <location>
        <begin position="1"/>
        <end position="293"/>
    </location>
</feature>
<feature type="region of interest" description="Disordered" evidence="2">
    <location>
        <begin position="249"/>
        <end position="273"/>
    </location>
</feature>
<feature type="compositionally biased region" description="Basic residues" evidence="2">
    <location>
        <begin position="256"/>
        <end position="267"/>
    </location>
</feature>
<sequence>MGLVKVIKNKAYFKRYQVKLRRRREGKTDYYARKRLTVQDKNKYNTPKYRLIVRITNKDVVAQLAYSKIEGDVVVASAYSHELPRYGLKVGLTNYAAAYATGLLLARRHLKTIGLDSTYKGHEELTGEDYNVEEEGDRAPFKAVLDIGLARTTTGSKIFAVMKGVADGGINVPHSESRFFGFDQESKEYNAEAHRDRILGKHVADYMTYLKEEDEDRYKRQFSKFLAAGLNADNLVATYQKVHSAIRADASPAAKKAAKPSKRHTAKRLTYDERKQRVADKKALLLQLKEQQE</sequence>
<accession>P49405</accession>
<keyword id="KW-0002">3D-structure</keyword>
<keyword id="KW-0963">Cytoplasm</keyword>
<keyword id="KW-0539">Nucleus</keyword>
<keyword id="KW-1185">Reference proteome</keyword>
<keyword id="KW-0687">Ribonucleoprotein</keyword>
<keyword id="KW-0689">Ribosomal protein</keyword>
<keyword id="KW-0694">RNA-binding</keyword>
<keyword id="KW-0699">rRNA-binding</keyword>
<reference key="1">
    <citation type="journal article" date="1998" name="Science">
        <title>Genome sequence of the nematode C. elegans: a platform for investigating biology.</title>
        <authorList>
            <consortium name="The C. elegans sequencing consortium"/>
        </authorList>
    </citation>
    <scope>NUCLEOTIDE SEQUENCE [LARGE SCALE GENOMIC DNA]</scope>
    <source>
        <strain>Bristol N2</strain>
    </source>
</reference>
<name>RL5_CAEEL</name>
<gene>
    <name type="primary">rpl-5</name>
    <name type="ORF">F54C9.5</name>
</gene>